<proteinExistence type="inferred from homology"/>
<name>FLGI1_PHOPR</name>
<reference key="1">
    <citation type="journal article" date="2005" name="Science">
        <title>Life at depth: Photobacterium profundum genome sequence and expression analysis.</title>
        <authorList>
            <person name="Vezzi A."/>
            <person name="Campanaro S."/>
            <person name="D'Angelo M."/>
            <person name="Simonato F."/>
            <person name="Vitulo N."/>
            <person name="Lauro F.M."/>
            <person name="Cestaro A."/>
            <person name="Malacrida G."/>
            <person name="Simionati B."/>
            <person name="Cannata N."/>
            <person name="Romualdi C."/>
            <person name="Bartlett D.H."/>
            <person name="Valle G."/>
        </authorList>
    </citation>
    <scope>NUCLEOTIDE SEQUENCE [LARGE SCALE GENOMIC DNA]</scope>
    <source>
        <strain>ATCC BAA-1253 / SS9</strain>
    </source>
</reference>
<sequence>MVPNLMVIKKHLIGLLLILCPLSLQAQPLFSVVDIQGIRENQLVGYGLVVGLSGTGDKSQTKFTSQSVKNMLSQFGVQLPANVNPKLKNVAAVAVNATLPALASKGQSLDITVSSIGDAKSLRGGTLLLTPLKGADGQIYAIAQGNLVVGGVVAQGNSGSGITINIPTAGLIPNGGIIEREVTSSFLTASTVVLNLKKPGFNTARNIEKEINELFGPDVALAQSHARIHVRAPHDPSQRVTFLAMLENLDIETGPRPARVVFNARTGTIVVGKNVKVHTAAVSHGNLTVSVMESFNVSQPNAFGRGNTAVTPETDVSIDQERGKVFIWPDSDEGTSLQTIVDAVNSLGATPNDLMAILIALDEAGALDGELVVL</sequence>
<feature type="signal peptide" evidence="1">
    <location>
        <begin position="1"/>
        <end position="26"/>
    </location>
</feature>
<feature type="chain" id="PRO_0000041801" description="Flagellar P-ring protein 1">
    <location>
        <begin position="27"/>
        <end position="374"/>
    </location>
</feature>
<organism>
    <name type="scientific">Photobacterium profundum (strain SS9)</name>
    <dbReference type="NCBI Taxonomy" id="298386"/>
    <lineage>
        <taxon>Bacteria</taxon>
        <taxon>Pseudomonadati</taxon>
        <taxon>Pseudomonadota</taxon>
        <taxon>Gammaproteobacteria</taxon>
        <taxon>Vibrionales</taxon>
        <taxon>Vibrionaceae</taxon>
        <taxon>Photobacterium</taxon>
    </lineage>
</organism>
<accession>Q6LW60</accession>
<comment type="function">
    <text evidence="1">Assembles around the rod to form the L-ring and probably protects the motor/basal body from shearing forces during rotation.</text>
</comment>
<comment type="subunit">
    <text evidence="1">The basal body constitutes a major portion of the flagellar organelle and consists of four rings (L,P,S, and M) mounted on a central rod.</text>
</comment>
<comment type="subcellular location">
    <subcellularLocation>
        <location evidence="1">Periplasm</location>
    </subcellularLocation>
    <subcellularLocation>
        <location evidence="1">Bacterial flagellum basal body</location>
    </subcellularLocation>
</comment>
<comment type="similarity">
    <text evidence="1">Belongs to the FlgI family.</text>
</comment>
<gene>
    <name evidence="1" type="primary">flgI1</name>
    <name type="ordered locus">PBPRA0036</name>
</gene>
<protein>
    <recommendedName>
        <fullName evidence="1">Flagellar P-ring protein 1</fullName>
    </recommendedName>
    <alternativeName>
        <fullName evidence="1">Basal body P-ring protein 1</fullName>
    </alternativeName>
</protein>
<evidence type="ECO:0000255" key="1">
    <source>
        <dbReference type="HAMAP-Rule" id="MF_00416"/>
    </source>
</evidence>
<keyword id="KW-0975">Bacterial flagellum</keyword>
<keyword id="KW-0574">Periplasm</keyword>
<keyword id="KW-1185">Reference proteome</keyword>
<keyword id="KW-0732">Signal</keyword>
<dbReference type="EMBL" id="CR378663">
    <property type="protein sequence ID" value="CAG18491.1"/>
    <property type="molecule type" value="Genomic_DNA"/>
</dbReference>
<dbReference type="SMR" id="Q6LW60"/>
<dbReference type="STRING" id="298386.PBPRA0036"/>
<dbReference type="KEGG" id="ppr:PBPRA0036"/>
<dbReference type="eggNOG" id="COG1706">
    <property type="taxonomic scope" value="Bacteria"/>
</dbReference>
<dbReference type="HOGENOM" id="CLU_045235_1_0_6"/>
<dbReference type="Proteomes" id="UP000000593">
    <property type="component" value="Chromosome 1"/>
</dbReference>
<dbReference type="GO" id="GO:0009428">
    <property type="term" value="C:bacterial-type flagellum basal body, distal rod, P ring"/>
    <property type="evidence" value="ECO:0007669"/>
    <property type="project" value="InterPro"/>
</dbReference>
<dbReference type="GO" id="GO:0030288">
    <property type="term" value="C:outer membrane-bounded periplasmic space"/>
    <property type="evidence" value="ECO:0007669"/>
    <property type="project" value="InterPro"/>
</dbReference>
<dbReference type="GO" id="GO:0005198">
    <property type="term" value="F:structural molecule activity"/>
    <property type="evidence" value="ECO:0007669"/>
    <property type="project" value="InterPro"/>
</dbReference>
<dbReference type="GO" id="GO:0071973">
    <property type="term" value="P:bacterial-type flagellum-dependent cell motility"/>
    <property type="evidence" value="ECO:0007669"/>
    <property type="project" value="InterPro"/>
</dbReference>
<dbReference type="HAMAP" id="MF_00416">
    <property type="entry name" value="FlgI"/>
    <property type="match status" value="1"/>
</dbReference>
<dbReference type="InterPro" id="IPR001782">
    <property type="entry name" value="Flag_FlgI"/>
</dbReference>
<dbReference type="NCBIfam" id="NF003676">
    <property type="entry name" value="PRK05303.1"/>
    <property type="match status" value="1"/>
</dbReference>
<dbReference type="PANTHER" id="PTHR30381">
    <property type="entry name" value="FLAGELLAR P-RING PERIPLASMIC PROTEIN FLGI"/>
    <property type="match status" value="1"/>
</dbReference>
<dbReference type="PANTHER" id="PTHR30381:SF0">
    <property type="entry name" value="FLAGELLAR P-RING PROTEIN"/>
    <property type="match status" value="1"/>
</dbReference>
<dbReference type="Pfam" id="PF02119">
    <property type="entry name" value="FlgI"/>
    <property type="match status" value="1"/>
</dbReference>
<dbReference type="PRINTS" id="PR01010">
    <property type="entry name" value="FLGPRINGFLGI"/>
</dbReference>